<dbReference type="EC" id="2.3.2.6" evidence="1"/>
<dbReference type="EMBL" id="CP001096">
    <property type="protein sequence ID" value="ACF01216.1"/>
    <property type="molecule type" value="Genomic_DNA"/>
</dbReference>
<dbReference type="RefSeq" id="WP_012495922.1">
    <property type="nucleotide sequence ID" value="NC_011004.1"/>
</dbReference>
<dbReference type="SMR" id="B3QH27"/>
<dbReference type="KEGG" id="rpt:Rpal_2707"/>
<dbReference type="HOGENOM" id="CLU_075045_1_1_5"/>
<dbReference type="OrthoDB" id="9790282at2"/>
<dbReference type="Proteomes" id="UP000001725">
    <property type="component" value="Chromosome"/>
</dbReference>
<dbReference type="GO" id="GO:0005737">
    <property type="term" value="C:cytoplasm"/>
    <property type="evidence" value="ECO:0007669"/>
    <property type="project" value="UniProtKB-SubCell"/>
</dbReference>
<dbReference type="GO" id="GO:0008914">
    <property type="term" value="F:leucyl-tRNA--protein transferase activity"/>
    <property type="evidence" value="ECO:0007669"/>
    <property type="project" value="UniProtKB-UniRule"/>
</dbReference>
<dbReference type="GO" id="GO:0030163">
    <property type="term" value="P:protein catabolic process"/>
    <property type="evidence" value="ECO:0007669"/>
    <property type="project" value="UniProtKB-UniRule"/>
</dbReference>
<dbReference type="FunFam" id="3.40.630.70:FF:000001">
    <property type="entry name" value="Leucyl/phenylalanyl-tRNA--protein transferase"/>
    <property type="match status" value="1"/>
</dbReference>
<dbReference type="Gene3D" id="3.40.630.70">
    <property type="entry name" value="Leucyl/phenylalanyl-tRNA-protein transferase, C-terminal domain"/>
    <property type="match status" value="1"/>
</dbReference>
<dbReference type="HAMAP" id="MF_00688">
    <property type="entry name" value="Leu_Phe_trans"/>
    <property type="match status" value="1"/>
</dbReference>
<dbReference type="InterPro" id="IPR016181">
    <property type="entry name" value="Acyl_CoA_acyltransferase"/>
</dbReference>
<dbReference type="InterPro" id="IPR004616">
    <property type="entry name" value="Leu/Phe-tRNA_Trfase"/>
</dbReference>
<dbReference type="InterPro" id="IPR042203">
    <property type="entry name" value="Leu/Phe-tRNA_Trfase_C"/>
</dbReference>
<dbReference type="NCBIfam" id="TIGR00667">
    <property type="entry name" value="aat"/>
    <property type="match status" value="1"/>
</dbReference>
<dbReference type="PANTHER" id="PTHR30098">
    <property type="entry name" value="LEUCYL/PHENYLALANYL-TRNA--PROTEIN TRANSFERASE"/>
    <property type="match status" value="1"/>
</dbReference>
<dbReference type="PANTHER" id="PTHR30098:SF2">
    <property type="entry name" value="LEUCYL_PHENYLALANYL-TRNA--PROTEIN TRANSFERASE"/>
    <property type="match status" value="1"/>
</dbReference>
<dbReference type="Pfam" id="PF03588">
    <property type="entry name" value="Leu_Phe_trans"/>
    <property type="match status" value="1"/>
</dbReference>
<dbReference type="SUPFAM" id="SSF55729">
    <property type="entry name" value="Acyl-CoA N-acyltransferases (Nat)"/>
    <property type="match status" value="1"/>
</dbReference>
<comment type="function">
    <text evidence="1">Functions in the N-end rule pathway of protein degradation where it conjugates Leu, Phe and, less efficiently, Met from aminoacyl-tRNAs to the N-termini of proteins containing an N-terminal arginine or lysine.</text>
</comment>
<comment type="catalytic activity">
    <reaction evidence="1">
        <text>N-terminal L-lysyl-[protein] + L-leucyl-tRNA(Leu) = N-terminal L-leucyl-L-lysyl-[protein] + tRNA(Leu) + H(+)</text>
        <dbReference type="Rhea" id="RHEA:12340"/>
        <dbReference type="Rhea" id="RHEA-COMP:9613"/>
        <dbReference type="Rhea" id="RHEA-COMP:9622"/>
        <dbReference type="Rhea" id="RHEA-COMP:12670"/>
        <dbReference type="Rhea" id="RHEA-COMP:12671"/>
        <dbReference type="ChEBI" id="CHEBI:15378"/>
        <dbReference type="ChEBI" id="CHEBI:65249"/>
        <dbReference type="ChEBI" id="CHEBI:78442"/>
        <dbReference type="ChEBI" id="CHEBI:78494"/>
        <dbReference type="ChEBI" id="CHEBI:133043"/>
        <dbReference type="EC" id="2.3.2.6"/>
    </reaction>
</comment>
<comment type="catalytic activity">
    <reaction evidence="1">
        <text>N-terminal L-arginyl-[protein] + L-leucyl-tRNA(Leu) = N-terminal L-leucyl-L-arginyl-[protein] + tRNA(Leu) + H(+)</text>
        <dbReference type="Rhea" id="RHEA:50416"/>
        <dbReference type="Rhea" id="RHEA-COMP:9613"/>
        <dbReference type="Rhea" id="RHEA-COMP:9622"/>
        <dbReference type="Rhea" id="RHEA-COMP:12672"/>
        <dbReference type="Rhea" id="RHEA-COMP:12673"/>
        <dbReference type="ChEBI" id="CHEBI:15378"/>
        <dbReference type="ChEBI" id="CHEBI:64719"/>
        <dbReference type="ChEBI" id="CHEBI:78442"/>
        <dbReference type="ChEBI" id="CHEBI:78494"/>
        <dbReference type="ChEBI" id="CHEBI:133044"/>
        <dbReference type="EC" id="2.3.2.6"/>
    </reaction>
</comment>
<comment type="catalytic activity">
    <reaction evidence="1">
        <text>L-phenylalanyl-tRNA(Phe) + an N-terminal L-alpha-aminoacyl-[protein] = an N-terminal L-phenylalanyl-L-alpha-aminoacyl-[protein] + tRNA(Phe)</text>
        <dbReference type="Rhea" id="RHEA:43632"/>
        <dbReference type="Rhea" id="RHEA-COMP:9668"/>
        <dbReference type="Rhea" id="RHEA-COMP:9699"/>
        <dbReference type="Rhea" id="RHEA-COMP:10636"/>
        <dbReference type="Rhea" id="RHEA-COMP:10637"/>
        <dbReference type="ChEBI" id="CHEBI:78442"/>
        <dbReference type="ChEBI" id="CHEBI:78531"/>
        <dbReference type="ChEBI" id="CHEBI:78597"/>
        <dbReference type="ChEBI" id="CHEBI:83561"/>
        <dbReference type="EC" id="2.3.2.6"/>
    </reaction>
</comment>
<comment type="subcellular location">
    <subcellularLocation>
        <location evidence="1">Cytoplasm</location>
    </subcellularLocation>
</comment>
<comment type="similarity">
    <text evidence="1">Belongs to the L/F-transferase family.</text>
</comment>
<name>LFTR_RHOPT</name>
<proteinExistence type="inferred from homology"/>
<evidence type="ECO:0000255" key="1">
    <source>
        <dbReference type="HAMAP-Rule" id="MF_00688"/>
    </source>
</evidence>
<gene>
    <name evidence="1" type="primary">aat</name>
    <name type="ordered locus">Rpal_2707</name>
</gene>
<protein>
    <recommendedName>
        <fullName evidence="1">Leucyl/phenylalanyl-tRNA--protein transferase</fullName>
        <ecNumber evidence="1">2.3.2.6</ecNumber>
    </recommendedName>
    <alternativeName>
        <fullName evidence="1">L/F-transferase</fullName>
    </alternativeName>
    <alternativeName>
        <fullName evidence="1">Leucyltransferase</fullName>
    </alternativeName>
    <alternativeName>
        <fullName evidence="1">Phenyalanyltransferase</fullName>
    </alternativeName>
</protein>
<sequence length="225" mass="24637">MASRDSSAASEITPDVLLRAYACGIFPMAESVDDPSLFWVEPDMRGIIPLGGFRVSSRLARTVRSDAFTVTVNRDFKAVIDGCAAPQPGRDDTWINRRIRELYIGLHDIGHCHSVEVWQDGDLAGGLYGVSLGRAFFGESMFHRARDASKVALVHLVARLLAGGYTLLDTQFVTDHLKSFGAIEVPRLRYRSLLDDSLEGEASFAALPLDRPVTGTEALAIITRT</sequence>
<keyword id="KW-0012">Acyltransferase</keyword>
<keyword id="KW-0963">Cytoplasm</keyword>
<keyword id="KW-0808">Transferase</keyword>
<organism>
    <name type="scientific">Rhodopseudomonas palustris (strain TIE-1)</name>
    <dbReference type="NCBI Taxonomy" id="395960"/>
    <lineage>
        <taxon>Bacteria</taxon>
        <taxon>Pseudomonadati</taxon>
        <taxon>Pseudomonadota</taxon>
        <taxon>Alphaproteobacteria</taxon>
        <taxon>Hyphomicrobiales</taxon>
        <taxon>Nitrobacteraceae</taxon>
        <taxon>Rhodopseudomonas</taxon>
    </lineage>
</organism>
<reference key="1">
    <citation type="submission" date="2008-05" db="EMBL/GenBank/DDBJ databases">
        <title>Complete sequence of Rhodopseudomonas palustris TIE-1.</title>
        <authorList>
            <consortium name="US DOE Joint Genome Institute"/>
            <person name="Lucas S."/>
            <person name="Copeland A."/>
            <person name="Lapidus A."/>
            <person name="Glavina del Rio T."/>
            <person name="Dalin E."/>
            <person name="Tice H."/>
            <person name="Pitluck S."/>
            <person name="Chain P."/>
            <person name="Malfatti S."/>
            <person name="Shin M."/>
            <person name="Vergez L."/>
            <person name="Lang D."/>
            <person name="Schmutz J."/>
            <person name="Larimer F."/>
            <person name="Land M."/>
            <person name="Hauser L."/>
            <person name="Kyrpides N."/>
            <person name="Mikhailova N."/>
            <person name="Emerson D."/>
            <person name="Newman D.K."/>
            <person name="Roden E."/>
            <person name="Richardson P."/>
        </authorList>
    </citation>
    <scope>NUCLEOTIDE SEQUENCE [LARGE SCALE GENOMIC DNA]</scope>
    <source>
        <strain>TIE-1</strain>
    </source>
</reference>
<feature type="chain" id="PRO_1000131943" description="Leucyl/phenylalanyl-tRNA--protein transferase">
    <location>
        <begin position="1"/>
        <end position="225"/>
    </location>
</feature>
<accession>B3QH27</accession>